<reference key="1">
    <citation type="journal article" date="2006" name="Proc. Natl. Acad. Sci. U.S.A.">
        <title>Evolution of sensory complexity recorded in a myxobacterial genome.</title>
        <authorList>
            <person name="Goldman B.S."/>
            <person name="Nierman W.C."/>
            <person name="Kaiser D."/>
            <person name="Slater S.C."/>
            <person name="Durkin A.S."/>
            <person name="Eisen J.A."/>
            <person name="Ronning C.M."/>
            <person name="Barbazuk W.B."/>
            <person name="Blanchard M."/>
            <person name="Field C."/>
            <person name="Halling C."/>
            <person name="Hinkle G."/>
            <person name="Iartchuk O."/>
            <person name="Kim H.S."/>
            <person name="Mackenzie C."/>
            <person name="Madupu R."/>
            <person name="Miller N."/>
            <person name="Shvartsbeyn A."/>
            <person name="Sullivan S.A."/>
            <person name="Vaudin M."/>
            <person name="Wiegand R."/>
            <person name="Kaplan H.B."/>
        </authorList>
    </citation>
    <scope>NUCLEOTIDE SEQUENCE [LARGE SCALE GENOMIC DNA]</scope>
    <source>
        <strain>DK1622</strain>
    </source>
</reference>
<comment type="subunit">
    <text evidence="1">Part of the 50S ribosomal subunit. Contacts protein L32.</text>
</comment>
<comment type="similarity">
    <text evidence="1">Belongs to the bacterial ribosomal protein bL17 family.</text>
</comment>
<feature type="chain" id="PRO_1000068023" description="Large ribosomal subunit protein bL17">
    <location>
        <begin position="1"/>
        <end position="139"/>
    </location>
</feature>
<evidence type="ECO:0000255" key="1">
    <source>
        <dbReference type="HAMAP-Rule" id="MF_01368"/>
    </source>
</evidence>
<evidence type="ECO:0000305" key="2"/>
<name>RL17_MYXXD</name>
<gene>
    <name evidence="1" type="primary">rplQ</name>
    <name type="ordered locus">MXAN_3327</name>
</gene>
<proteinExistence type="inferred from homology"/>
<keyword id="KW-1185">Reference proteome</keyword>
<keyword id="KW-0687">Ribonucleoprotein</keyword>
<keyword id="KW-0689">Ribosomal protein</keyword>
<dbReference type="EMBL" id="CP000113">
    <property type="protein sequence ID" value="ABF91562.1"/>
    <property type="molecule type" value="Genomic_DNA"/>
</dbReference>
<dbReference type="RefSeq" id="WP_011553362.1">
    <property type="nucleotide sequence ID" value="NC_008095.1"/>
</dbReference>
<dbReference type="SMR" id="Q1D747"/>
<dbReference type="STRING" id="246197.MXAN_3327"/>
<dbReference type="EnsemblBacteria" id="ABF91562">
    <property type="protein sequence ID" value="ABF91562"/>
    <property type="gene ID" value="MXAN_3327"/>
</dbReference>
<dbReference type="GeneID" id="41360680"/>
<dbReference type="KEGG" id="mxa:MXAN_3327"/>
<dbReference type="eggNOG" id="COG0203">
    <property type="taxonomic scope" value="Bacteria"/>
</dbReference>
<dbReference type="HOGENOM" id="CLU_074407_2_0_7"/>
<dbReference type="OrthoDB" id="9809073at2"/>
<dbReference type="Proteomes" id="UP000002402">
    <property type="component" value="Chromosome"/>
</dbReference>
<dbReference type="GO" id="GO:0022625">
    <property type="term" value="C:cytosolic large ribosomal subunit"/>
    <property type="evidence" value="ECO:0007669"/>
    <property type="project" value="TreeGrafter"/>
</dbReference>
<dbReference type="GO" id="GO:0003735">
    <property type="term" value="F:structural constituent of ribosome"/>
    <property type="evidence" value="ECO:0007669"/>
    <property type="project" value="InterPro"/>
</dbReference>
<dbReference type="GO" id="GO:0006412">
    <property type="term" value="P:translation"/>
    <property type="evidence" value="ECO:0007669"/>
    <property type="project" value="UniProtKB-UniRule"/>
</dbReference>
<dbReference type="FunFam" id="3.90.1030.10:FF:000001">
    <property type="entry name" value="50S ribosomal protein L17"/>
    <property type="match status" value="1"/>
</dbReference>
<dbReference type="Gene3D" id="3.90.1030.10">
    <property type="entry name" value="Ribosomal protein L17"/>
    <property type="match status" value="1"/>
</dbReference>
<dbReference type="HAMAP" id="MF_01368">
    <property type="entry name" value="Ribosomal_bL17"/>
    <property type="match status" value="1"/>
</dbReference>
<dbReference type="InterPro" id="IPR000456">
    <property type="entry name" value="Ribosomal_bL17"/>
</dbReference>
<dbReference type="InterPro" id="IPR047859">
    <property type="entry name" value="Ribosomal_bL17_CS"/>
</dbReference>
<dbReference type="InterPro" id="IPR036373">
    <property type="entry name" value="Ribosomal_bL17_sf"/>
</dbReference>
<dbReference type="NCBIfam" id="TIGR00059">
    <property type="entry name" value="L17"/>
    <property type="match status" value="1"/>
</dbReference>
<dbReference type="PANTHER" id="PTHR14413:SF16">
    <property type="entry name" value="LARGE RIBOSOMAL SUBUNIT PROTEIN BL17M"/>
    <property type="match status" value="1"/>
</dbReference>
<dbReference type="PANTHER" id="PTHR14413">
    <property type="entry name" value="RIBOSOMAL PROTEIN L17"/>
    <property type="match status" value="1"/>
</dbReference>
<dbReference type="Pfam" id="PF01196">
    <property type="entry name" value="Ribosomal_L17"/>
    <property type="match status" value="1"/>
</dbReference>
<dbReference type="SUPFAM" id="SSF64263">
    <property type="entry name" value="Prokaryotic ribosomal protein L17"/>
    <property type="match status" value="1"/>
</dbReference>
<dbReference type="PROSITE" id="PS01167">
    <property type="entry name" value="RIBOSOMAL_L17"/>
    <property type="match status" value="1"/>
</dbReference>
<organism>
    <name type="scientific">Myxococcus xanthus (strain DK1622)</name>
    <dbReference type="NCBI Taxonomy" id="246197"/>
    <lineage>
        <taxon>Bacteria</taxon>
        <taxon>Pseudomonadati</taxon>
        <taxon>Myxococcota</taxon>
        <taxon>Myxococcia</taxon>
        <taxon>Myxococcales</taxon>
        <taxon>Cystobacterineae</taxon>
        <taxon>Myxococcaceae</taxon>
        <taxon>Myxococcus</taxon>
    </lineage>
</organism>
<sequence>MRHKVGQRKLHRSTSHRLAMLNNMVTSLLEHQAIRTTLPKAKEARKIAERIITLGKRGGLANVRLAARTVKDRDVLQKVFGEYKDRYASRPGGYTRIVRLGFRRGDAAEMALLELVDRPEKAAPVDTEAAAPAEETKAE</sequence>
<protein>
    <recommendedName>
        <fullName evidence="1">Large ribosomal subunit protein bL17</fullName>
    </recommendedName>
    <alternativeName>
        <fullName evidence="2">50S ribosomal protein L17</fullName>
    </alternativeName>
</protein>
<accession>Q1D747</accession>